<proteinExistence type="inferred from homology"/>
<gene>
    <name type="ORF">SJCHGC01960</name>
    <name type="ORF">SJCHGC09469</name>
</gene>
<sequence>MSARAFRKFAPLFDRVLVQRFEAETKSKGGIMLPEKAKGKVLEATVVAHGPGVKNEKGEVVPVCVTVGDKVFLPEYGGTKVVLEDTEYFLFRESDILAKFEK</sequence>
<dbReference type="EMBL" id="AY814855">
    <property type="protein sequence ID" value="AAW26587.1"/>
    <property type="status" value="ALT_SEQ"/>
    <property type="molecule type" value="mRNA"/>
</dbReference>
<dbReference type="EMBL" id="AY222993">
    <property type="protein sequence ID" value="AAP06016.2"/>
    <property type="status" value="ALT_INIT"/>
    <property type="molecule type" value="mRNA"/>
</dbReference>
<dbReference type="SMR" id="Q5DC69"/>
<dbReference type="OrthoDB" id="184876at2759"/>
<dbReference type="GO" id="GO:0005759">
    <property type="term" value="C:mitochondrial matrix"/>
    <property type="evidence" value="ECO:0007669"/>
    <property type="project" value="UniProtKB-SubCell"/>
</dbReference>
<dbReference type="GO" id="GO:0005524">
    <property type="term" value="F:ATP binding"/>
    <property type="evidence" value="ECO:0007669"/>
    <property type="project" value="InterPro"/>
</dbReference>
<dbReference type="GO" id="GO:0046872">
    <property type="term" value="F:metal ion binding"/>
    <property type="evidence" value="ECO:0007669"/>
    <property type="project" value="TreeGrafter"/>
</dbReference>
<dbReference type="GO" id="GO:0044183">
    <property type="term" value="F:protein folding chaperone"/>
    <property type="evidence" value="ECO:0007669"/>
    <property type="project" value="InterPro"/>
</dbReference>
<dbReference type="GO" id="GO:0051087">
    <property type="term" value="F:protein-folding chaperone binding"/>
    <property type="evidence" value="ECO:0007669"/>
    <property type="project" value="TreeGrafter"/>
</dbReference>
<dbReference type="GO" id="GO:0051082">
    <property type="term" value="F:unfolded protein binding"/>
    <property type="evidence" value="ECO:0007669"/>
    <property type="project" value="TreeGrafter"/>
</dbReference>
<dbReference type="GO" id="GO:0051085">
    <property type="term" value="P:chaperone cofactor-dependent protein refolding"/>
    <property type="evidence" value="ECO:0007669"/>
    <property type="project" value="TreeGrafter"/>
</dbReference>
<dbReference type="CDD" id="cd00320">
    <property type="entry name" value="cpn10"/>
    <property type="match status" value="1"/>
</dbReference>
<dbReference type="FunFam" id="2.30.33.40:FF:000002">
    <property type="entry name" value="10 kDa chaperonin, mitochondrial"/>
    <property type="match status" value="1"/>
</dbReference>
<dbReference type="Gene3D" id="2.30.33.40">
    <property type="entry name" value="GroES chaperonin"/>
    <property type="match status" value="1"/>
</dbReference>
<dbReference type="HAMAP" id="MF_00580">
    <property type="entry name" value="CH10"/>
    <property type="match status" value="1"/>
</dbReference>
<dbReference type="InterPro" id="IPR020818">
    <property type="entry name" value="Chaperonin_GroES"/>
</dbReference>
<dbReference type="InterPro" id="IPR037124">
    <property type="entry name" value="Chaperonin_GroES_sf"/>
</dbReference>
<dbReference type="InterPro" id="IPR018369">
    <property type="entry name" value="Chaprnonin_Cpn10_CS"/>
</dbReference>
<dbReference type="InterPro" id="IPR011032">
    <property type="entry name" value="GroES-like_sf"/>
</dbReference>
<dbReference type="PANTHER" id="PTHR10772">
    <property type="entry name" value="10 KDA HEAT SHOCK PROTEIN"/>
    <property type="match status" value="1"/>
</dbReference>
<dbReference type="PANTHER" id="PTHR10772:SF0">
    <property type="entry name" value="10 KDA HEAT SHOCK PROTEIN, MITOCHONDRIAL"/>
    <property type="match status" value="1"/>
</dbReference>
<dbReference type="Pfam" id="PF00166">
    <property type="entry name" value="Cpn10"/>
    <property type="match status" value="1"/>
</dbReference>
<dbReference type="PRINTS" id="PR00297">
    <property type="entry name" value="CHAPERONIN10"/>
</dbReference>
<dbReference type="SMART" id="SM00883">
    <property type="entry name" value="Cpn10"/>
    <property type="match status" value="1"/>
</dbReference>
<dbReference type="SUPFAM" id="SSF50129">
    <property type="entry name" value="GroES-like"/>
    <property type="match status" value="1"/>
</dbReference>
<dbReference type="PROSITE" id="PS00681">
    <property type="entry name" value="CHAPERONINS_CPN10"/>
    <property type="match status" value="1"/>
</dbReference>
<comment type="function">
    <text evidence="1">Eukaryotic CPN10 homolog which is essential for mitochondrial protein biogenesis, together with CPN60. Binds to CPN60 in the presence of Mg-ATP and suppresses the ATPase activity of the latter (By similarity).</text>
</comment>
<comment type="subunit">
    <text evidence="2">Homohexamer.</text>
</comment>
<comment type="subcellular location">
    <subcellularLocation>
        <location evidence="2">Mitochondrion matrix</location>
    </subcellularLocation>
</comment>
<comment type="similarity">
    <text evidence="3">Belongs to the GroES chaperonin family.</text>
</comment>
<comment type="sequence caution" evidence="3">
    <conflict type="erroneous initiation">
        <sequence resource="EMBL-CDS" id="AAP06016"/>
    </conflict>
</comment>
<comment type="sequence caution" evidence="3">
    <conflict type="miscellaneous discrepancy">
        <sequence resource="EMBL-CDS" id="AAW26587"/>
    </conflict>
    <text>Divergent C-terminal sequence of unknown origin.</text>
</comment>
<name>CH10_SCHJA</name>
<organism>
    <name type="scientific">Schistosoma japonicum</name>
    <name type="common">Blood fluke</name>
    <dbReference type="NCBI Taxonomy" id="6182"/>
    <lineage>
        <taxon>Eukaryota</taxon>
        <taxon>Metazoa</taxon>
        <taxon>Spiralia</taxon>
        <taxon>Lophotrochozoa</taxon>
        <taxon>Platyhelminthes</taxon>
        <taxon>Trematoda</taxon>
        <taxon>Digenea</taxon>
        <taxon>Strigeidida</taxon>
        <taxon>Schistosomatoidea</taxon>
        <taxon>Schistosomatidae</taxon>
        <taxon>Schistosoma</taxon>
    </lineage>
</organism>
<feature type="chain" id="PRO_0000355074" description="10 kDa heat shock protein, mitochondrial">
    <location>
        <begin position="1"/>
        <end position="102"/>
    </location>
</feature>
<accession>Q5DC69</accession>
<accession>Q86F71</accession>
<reference evidence="5" key="1">
    <citation type="journal article" date="2006" name="PLoS Pathog.">
        <title>New perspectives on host-parasite interplay by comparative transcriptomic and proteomic analyses of Schistosoma japonicum.</title>
        <authorList>
            <person name="Liu F."/>
            <person name="Lu J."/>
            <person name="Hu W."/>
            <person name="Wang S.-Y."/>
            <person name="Cui S.-J."/>
            <person name="Chi M."/>
            <person name="Yan Q."/>
            <person name="Wang X.-R."/>
            <person name="Song H.-D."/>
            <person name="Xu X.-N."/>
            <person name="Wang J.-J."/>
            <person name="Zhang X.-L."/>
            <person name="Zhang X."/>
            <person name="Wang Z.-Q."/>
            <person name="Xue C.-L."/>
            <person name="Brindley P.J."/>
            <person name="McManus D.P."/>
            <person name="Yang P.-Y."/>
            <person name="Feng Z."/>
            <person name="Chen Z."/>
            <person name="Han Z.-G."/>
        </authorList>
    </citation>
    <scope>NUCLEOTIDE SEQUENCE [LARGE SCALE MRNA]</scope>
</reference>
<reference evidence="4" key="2">
    <citation type="submission" date="2008-03" db="EMBL/GenBank/DDBJ databases">
        <authorList>
            <person name="Liu F."/>
            <person name="Lu J."/>
            <person name="Hu W."/>
            <person name="Wang S.-Y."/>
            <person name="Cui S.-J."/>
            <person name="Chi M."/>
            <person name="Yan Q."/>
            <person name="Wang X.-R."/>
            <person name="Song H.-D."/>
            <person name="Xu X.-N."/>
            <person name="Wang J.-J."/>
            <person name="Zhang X.-L."/>
            <person name="Wang Z.-Q."/>
            <person name="Xue C.-L."/>
            <person name="Brindley P.J."/>
            <person name="McManus D.P."/>
            <person name="Yang P.-Y."/>
            <person name="Feng Z."/>
            <person name="Chen Z."/>
            <person name="Han Z.-G."/>
        </authorList>
    </citation>
    <scope>NUCLEOTIDE SEQUENCE [LARGE SCALE MRNA]</scope>
</reference>
<evidence type="ECO:0000250" key="1"/>
<evidence type="ECO:0000250" key="2">
    <source>
        <dbReference type="UniProtKB" id="P61604"/>
    </source>
</evidence>
<evidence type="ECO:0000305" key="3"/>
<evidence type="ECO:0000312" key="4">
    <source>
        <dbReference type="EMBL" id="AAP06016.2"/>
    </source>
</evidence>
<evidence type="ECO:0000312" key="5">
    <source>
        <dbReference type="EMBL" id="AAW26587.1"/>
    </source>
</evidence>
<protein>
    <recommendedName>
        <fullName evidence="2">10 kDa heat shock protein, mitochondrial</fullName>
        <shortName>Hsp10</shortName>
    </recommendedName>
    <alternativeName>
        <fullName>10 kDa chaperonin</fullName>
    </alternativeName>
    <alternativeName>
        <fullName>Chaperonin 10</fullName>
        <shortName>CPN10</shortName>
    </alternativeName>
</protein>
<keyword id="KW-0143">Chaperone</keyword>
<keyword id="KW-0496">Mitochondrion</keyword>